<comment type="function">
    <text evidence="1">Catalyzes the formation of phosphatidylethanolamine (PtdEtn) from phosphatidylserine (PtdSer).</text>
</comment>
<comment type="catalytic activity">
    <reaction evidence="1">
        <text>a 1,2-diacyl-sn-glycero-3-phospho-L-serine + H(+) = a 1,2-diacyl-sn-glycero-3-phosphoethanolamine + CO2</text>
        <dbReference type="Rhea" id="RHEA:20828"/>
        <dbReference type="ChEBI" id="CHEBI:15378"/>
        <dbReference type="ChEBI" id="CHEBI:16526"/>
        <dbReference type="ChEBI" id="CHEBI:57262"/>
        <dbReference type="ChEBI" id="CHEBI:64612"/>
        <dbReference type="EC" id="4.1.1.65"/>
    </reaction>
</comment>
<comment type="cofactor">
    <cofactor evidence="1">
        <name>pyruvate</name>
        <dbReference type="ChEBI" id="CHEBI:15361"/>
    </cofactor>
    <text evidence="1">Binds 1 pyruvoyl group covalently per subunit.</text>
</comment>
<comment type="pathway">
    <text evidence="1">Phospholipid metabolism; phosphatidylethanolamine biosynthesis; phosphatidylethanolamine from CDP-diacylglycerol: step 2/2.</text>
</comment>
<comment type="subunit">
    <text evidence="1">Heterodimer of a large membrane-associated beta subunit and a small pyruvoyl-containing alpha subunit.</text>
</comment>
<comment type="subcellular location">
    <subcellularLocation>
        <location evidence="1">Cell membrane</location>
        <topology evidence="1">Peripheral membrane protein</topology>
    </subcellularLocation>
</comment>
<comment type="PTM">
    <text evidence="1">Is synthesized initially as an inactive proenzyme. Formation of the active enzyme involves a self-maturation process in which the active site pyruvoyl group is generated from an internal serine residue via an autocatalytic post-translational modification. Two non-identical subunits are generated from the proenzyme in this reaction, and the pyruvate is formed at the N-terminus of the alpha chain, which is derived from the carboxyl end of the proenzyme. The autoendoproteolytic cleavage occurs by a canonical serine protease mechanism, in which the side chain hydroxyl group of the serine supplies its oxygen atom to form the C-terminus of the beta chain, while the remainder of the serine residue undergoes an oxidative deamination to produce ammonia and the pyruvoyl prosthetic group on the alpha chain. During this reaction, the Ser that is part of the protease active site of the proenzyme becomes the pyruvoyl prosthetic group, which constitutes an essential element of the active site of the mature decarboxylase.</text>
</comment>
<comment type="similarity">
    <text evidence="1">Belongs to the phosphatidylserine decarboxylase family. PSD-B subfamily. Prokaryotic type I sub-subfamily.</text>
</comment>
<dbReference type="EC" id="4.1.1.65" evidence="1"/>
<dbReference type="EMBL" id="AM286415">
    <property type="protein sequence ID" value="CAL10497.1"/>
    <property type="molecule type" value="Genomic_DNA"/>
</dbReference>
<dbReference type="RefSeq" id="YP_001004743.1">
    <property type="nucleotide sequence ID" value="NC_008800.1"/>
</dbReference>
<dbReference type="SMR" id="A1JIQ6"/>
<dbReference type="KEGG" id="yen:YE0367"/>
<dbReference type="PATRIC" id="fig|393305.7.peg.464"/>
<dbReference type="eggNOG" id="COG0688">
    <property type="taxonomic scope" value="Bacteria"/>
</dbReference>
<dbReference type="HOGENOM" id="CLU_029061_4_1_6"/>
<dbReference type="OrthoDB" id="9802030at2"/>
<dbReference type="UniPathway" id="UPA00558">
    <property type="reaction ID" value="UER00616"/>
</dbReference>
<dbReference type="Proteomes" id="UP000000642">
    <property type="component" value="Chromosome"/>
</dbReference>
<dbReference type="GO" id="GO:0005886">
    <property type="term" value="C:plasma membrane"/>
    <property type="evidence" value="ECO:0007669"/>
    <property type="project" value="UniProtKB-SubCell"/>
</dbReference>
<dbReference type="GO" id="GO:0004609">
    <property type="term" value="F:phosphatidylserine decarboxylase activity"/>
    <property type="evidence" value="ECO:0007669"/>
    <property type="project" value="UniProtKB-UniRule"/>
</dbReference>
<dbReference type="GO" id="GO:0006646">
    <property type="term" value="P:phosphatidylethanolamine biosynthetic process"/>
    <property type="evidence" value="ECO:0007669"/>
    <property type="project" value="UniProtKB-UniRule"/>
</dbReference>
<dbReference type="HAMAP" id="MF_00662">
    <property type="entry name" value="PS_decarb_PSD_B_type1"/>
    <property type="match status" value="1"/>
</dbReference>
<dbReference type="InterPro" id="IPR003817">
    <property type="entry name" value="PS_Dcarbxylase"/>
</dbReference>
<dbReference type="InterPro" id="IPR033177">
    <property type="entry name" value="PSD-B"/>
</dbReference>
<dbReference type="InterPro" id="IPR033178">
    <property type="entry name" value="PSD_type1_pro"/>
</dbReference>
<dbReference type="NCBIfam" id="TIGR00163">
    <property type="entry name" value="PS_decarb"/>
    <property type="match status" value="1"/>
</dbReference>
<dbReference type="PANTHER" id="PTHR10067">
    <property type="entry name" value="PHOSPHATIDYLSERINE DECARBOXYLASE"/>
    <property type="match status" value="1"/>
</dbReference>
<dbReference type="PANTHER" id="PTHR10067:SF6">
    <property type="entry name" value="PHOSPHATIDYLSERINE DECARBOXYLASE PROENZYME, MITOCHONDRIAL"/>
    <property type="match status" value="1"/>
</dbReference>
<dbReference type="Pfam" id="PF02666">
    <property type="entry name" value="PS_Dcarbxylase"/>
    <property type="match status" value="1"/>
</dbReference>
<organism>
    <name type="scientific">Yersinia enterocolitica serotype O:8 / biotype 1B (strain NCTC 13174 / 8081)</name>
    <dbReference type="NCBI Taxonomy" id="393305"/>
    <lineage>
        <taxon>Bacteria</taxon>
        <taxon>Pseudomonadati</taxon>
        <taxon>Pseudomonadota</taxon>
        <taxon>Gammaproteobacteria</taxon>
        <taxon>Enterobacterales</taxon>
        <taxon>Yersiniaceae</taxon>
        <taxon>Yersinia</taxon>
    </lineage>
</organism>
<feature type="chain" id="PRO_1000026598" description="Phosphatidylserine decarboxylase beta chain" evidence="1">
    <location>
        <begin position="1"/>
        <end position="253"/>
    </location>
</feature>
<feature type="chain" id="PRO_1000026599" description="Phosphatidylserine decarboxylase alpha chain" evidence="1">
    <location>
        <begin position="254"/>
        <end position="293"/>
    </location>
</feature>
<feature type="active site" description="Charge relay system; for autoendoproteolytic cleavage activity" evidence="1">
    <location>
        <position position="90"/>
    </location>
</feature>
<feature type="active site" description="Charge relay system; for autoendoproteolytic cleavage activity" evidence="1">
    <location>
        <position position="147"/>
    </location>
</feature>
<feature type="active site" description="Charge relay system; for autoendoproteolytic cleavage activity" evidence="1">
    <location>
        <position position="254"/>
    </location>
</feature>
<feature type="active site" description="Schiff-base intermediate with substrate; via pyruvic acid; for decarboxylase activity" evidence="1">
    <location>
        <position position="254"/>
    </location>
</feature>
<feature type="site" description="Cleavage (non-hydrolytic); by autocatalysis" evidence="1">
    <location>
        <begin position="253"/>
        <end position="254"/>
    </location>
</feature>
<feature type="modified residue" description="Pyruvic acid (Ser); by autocatalysis" evidence="1">
    <location>
        <position position="254"/>
    </location>
</feature>
<protein>
    <recommendedName>
        <fullName evidence="1">Phosphatidylserine decarboxylase proenzyme</fullName>
        <ecNumber evidence="1">4.1.1.65</ecNumber>
    </recommendedName>
    <component>
        <recommendedName>
            <fullName evidence="1">Phosphatidylserine decarboxylase alpha chain</fullName>
        </recommendedName>
    </component>
    <component>
        <recommendedName>
            <fullName evidence="1">Phosphatidylserine decarboxylase beta chain</fullName>
        </recommendedName>
    </component>
</protein>
<name>PSD_YERE8</name>
<proteinExistence type="inferred from homology"/>
<gene>
    <name evidence="1" type="primary">psd</name>
    <name type="ordered locus">YE0367</name>
</gene>
<reference key="1">
    <citation type="journal article" date="2006" name="PLoS Genet.">
        <title>The complete genome sequence and comparative genome analysis of the high pathogenicity Yersinia enterocolitica strain 8081.</title>
        <authorList>
            <person name="Thomson N.R."/>
            <person name="Howard S."/>
            <person name="Wren B.W."/>
            <person name="Holden M.T.G."/>
            <person name="Crossman L."/>
            <person name="Challis G.L."/>
            <person name="Churcher C."/>
            <person name="Mungall K."/>
            <person name="Brooks K."/>
            <person name="Chillingworth T."/>
            <person name="Feltwell T."/>
            <person name="Abdellah Z."/>
            <person name="Hauser H."/>
            <person name="Jagels K."/>
            <person name="Maddison M."/>
            <person name="Moule S."/>
            <person name="Sanders M."/>
            <person name="Whitehead S."/>
            <person name="Quail M.A."/>
            <person name="Dougan G."/>
            <person name="Parkhill J."/>
            <person name="Prentice M.B."/>
        </authorList>
    </citation>
    <scope>NUCLEOTIDE SEQUENCE [LARGE SCALE GENOMIC DNA]</scope>
    <source>
        <strain>NCTC 13174 / 8081</strain>
    </source>
</reference>
<sequence>MLDSIKIRLQYLLPKQGLTRLAGWGADKQAGWLTQLVIKAFARYYKVNMQEAQDPEFSAYRTFNEFFVRPLRAGARPVVAEENLLAQPADGAISQLGTIHDGQILQAKGHDYSVEALLAGNYMLAAEFQNGQFVTTYLAPRDYHRVHMPCDGVLREMIYVPGDLFSVNPLTAANVPNLFARNERVICIFDTTFGPMAQILVGATIVGSIETVWAGTITPPREGVIRRWTYPQAGAEGAITLEKGQEMGRFKLGSTVINLFAEGKVYLAPQLNSGSVTRMGEVLAEAVPVTPPC</sequence>
<accession>A1JIQ6</accession>
<keyword id="KW-1003">Cell membrane</keyword>
<keyword id="KW-0210">Decarboxylase</keyword>
<keyword id="KW-0444">Lipid biosynthesis</keyword>
<keyword id="KW-0443">Lipid metabolism</keyword>
<keyword id="KW-0456">Lyase</keyword>
<keyword id="KW-0472">Membrane</keyword>
<keyword id="KW-0594">Phospholipid biosynthesis</keyword>
<keyword id="KW-1208">Phospholipid metabolism</keyword>
<keyword id="KW-0670">Pyruvate</keyword>
<keyword id="KW-0865">Zymogen</keyword>
<evidence type="ECO:0000255" key="1">
    <source>
        <dbReference type="HAMAP-Rule" id="MF_00662"/>
    </source>
</evidence>